<organism>
    <name type="scientific">Yersinia enterocolitica serotype O:8 / biotype 1B (strain NCTC 13174 / 8081)</name>
    <dbReference type="NCBI Taxonomy" id="393305"/>
    <lineage>
        <taxon>Bacteria</taxon>
        <taxon>Pseudomonadati</taxon>
        <taxon>Pseudomonadota</taxon>
        <taxon>Gammaproteobacteria</taxon>
        <taxon>Enterobacterales</taxon>
        <taxon>Yersiniaceae</taxon>
        <taxon>Yersinia</taxon>
    </lineage>
</organism>
<feature type="chain" id="PRO_0000332914" description="Cysteine--tRNA ligase">
    <location>
        <begin position="1"/>
        <end position="461"/>
    </location>
</feature>
<feature type="short sequence motif" description="'HIGH' region">
    <location>
        <begin position="30"/>
        <end position="40"/>
    </location>
</feature>
<feature type="short sequence motif" description="'KMSKS' region">
    <location>
        <begin position="266"/>
        <end position="270"/>
    </location>
</feature>
<feature type="binding site" evidence="1">
    <location>
        <position position="28"/>
    </location>
    <ligand>
        <name>Zn(2+)</name>
        <dbReference type="ChEBI" id="CHEBI:29105"/>
    </ligand>
</feature>
<feature type="binding site" evidence="1">
    <location>
        <position position="209"/>
    </location>
    <ligand>
        <name>Zn(2+)</name>
        <dbReference type="ChEBI" id="CHEBI:29105"/>
    </ligand>
</feature>
<feature type="binding site" evidence="1">
    <location>
        <position position="234"/>
    </location>
    <ligand>
        <name>Zn(2+)</name>
        <dbReference type="ChEBI" id="CHEBI:29105"/>
    </ligand>
</feature>
<feature type="binding site" evidence="1">
    <location>
        <position position="238"/>
    </location>
    <ligand>
        <name>Zn(2+)</name>
        <dbReference type="ChEBI" id="CHEBI:29105"/>
    </ligand>
</feature>
<feature type="binding site" evidence="1">
    <location>
        <position position="269"/>
    </location>
    <ligand>
        <name>ATP</name>
        <dbReference type="ChEBI" id="CHEBI:30616"/>
    </ligand>
</feature>
<accession>A1JNP9</accession>
<keyword id="KW-0030">Aminoacyl-tRNA synthetase</keyword>
<keyword id="KW-0067">ATP-binding</keyword>
<keyword id="KW-0963">Cytoplasm</keyword>
<keyword id="KW-0436">Ligase</keyword>
<keyword id="KW-0479">Metal-binding</keyword>
<keyword id="KW-0547">Nucleotide-binding</keyword>
<keyword id="KW-0648">Protein biosynthesis</keyword>
<keyword id="KW-0862">Zinc</keyword>
<proteinExistence type="inferred from homology"/>
<gene>
    <name evidence="1" type="primary">cysS</name>
    <name type="ordered locus">YE3048</name>
</gene>
<sequence length="461" mass="52278">MLKIFNTLSRQKEEFKPIHAGKVGMYVCGITIYDLCHIGHGRTFVAFDVVARYLRYLGYSLTYVRNVTDVDDKIIKRALENNETCEQLTTRMLVEMHKDFDALNLKRPDLEPRATHHIPEIIALTERLIARNHAYVAANGDVMFSVESDPDYGLLSRQDLDQLQAGARVEVADVKRNPMDFVLWKMSKPGEPSWESPWGPGRPGWHIECSAMNGKQLGAHFDIHGGGSDLMFPHHENEIAQSTCAHDGPYVNYWMHSGMVMIDKEKMSKSLNNFFTIRDVLAYYDAETVRYFLMSGHYRSQLNYSEENLKQARASLERLYTALRGTDANATPAGGAEFEARFRAAMDDDFNTPEAYSVLFDIAREVNRLKTEDITAANALAAELRKLAYVLGLLEQDPELFLQSGAQTDDDEVAKIEVLIKQRNDARSSKDWALADSARDQLNELGIVLEDGPQGTTWRRK</sequence>
<dbReference type="EC" id="6.1.1.16" evidence="1"/>
<dbReference type="EMBL" id="AM286415">
    <property type="protein sequence ID" value="CAL13084.1"/>
    <property type="molecule type" value="Genomic_DNA"/>
</dbReference>
<dbReference type="RefSeq" id="WP_011816854.1">
    <property type="nucleotide sequence ID" value="NC_008800.1"/>
</dbReference>
<dbReference type="RefSeq" id="YP_001007231.1">
    <property type="nucleotide sequence ID" value="NC_008800.1"/>
</dbReference>
<dbReference type="SMR" id="A1JNP9"/>
<dbReference type="KEGG" id="yen:YE3048"/>
<dbReference type="PATRIC" id="fig|393305.7.peg.3244"/>
<dbReference type="eggNOG" id="COG0215">
    <property type="taxonomic scope" value="Bacteria"/>
</dbReference>
<dbReference type="HOGENOM" id="CLU_013528_0_1_6"/>
<dbReference type="OrthoDB" id="9815130at2"/>
<dbReference type="Proteomes" id="UP000000642">
    <property type="component" value="Chromosome"/>
</dbReference>
<dbReference type="GO" id="GO:0005829">
    <property type="term" value="C:cytosol"/>
    <property type="evidence" value="ECO:0007669"/>
    <property type="project" value="TreeGrafter"/>
</dbReference>
<dbReference type="GO" id="GO:0005524">
    <property type="term" value="F:ATP binding"/>
    <property type="evidence" value="ECO:0007669"/>
    <property type="project" value="UniProtKB-UniRule"/>
</dbReference>
<dbReference type="GO" id="GO:0004817">
    <property type="term" value="F:cysteine-tRNA ligase activity"/>
    <property type="evidence" value="ECO:0007669"/>
    <property type="project" value="UniProtKB-UniRule"/>
</dbReference>
<dbReference type="GO" id="GO:0008270">
    <property type="term" value="F:zinc ion binding"/>
    <property type="evidence" value="ECO:0007669"/>
    <property type="project" value="UniProtKB-UniRule"/>
</dbReference>
<dbReference type="GO" id="GO:0006423">
    <property type="term" value="P:cysteinyl-tRNA aminoacylation"/>
    <property type="evidence" value="ECO:0007669"/>
    <property type="project" value="UniProtKB-UniRule"/>
</dbReference>
<dbReference type="CDD" id="cd07963">
    <property type="entry name" value="Anticodon_Ia_Cys"/>
    <property type="match status" value="1"/>
</dbReference>
<dbReference type="CDD" id="cd00672">
    <property type="entry name" value="CysRS_core"/>
    <property type="match status" value="1"/>
</dbReference>
<dbReference type="FunFam" id="1.20.120.1910:FF:000001">
    <property type="entry name" value="Cysteine--tRNA ligase"/>
    <property type="match status" value="1"/>
</dbReference>
<dbReference type="FunFam" id="3.40.50.620:FF:000009">
    <property type="entry name" value="Cysteine--tRNA ligase"/>
    <property type="match status" value="1"/>
</dbReference>
<dbReference type="Gene3D" id="1.20.120.1910">
    <property type="entry name" value="Cysteine-tRNA ligase, C-terminal anti-codon recognition domain"/>
    <property type="match status" value="1"/>
</dbReference>
<dbReference type="Gene3D" id="3.40.50.620">
    <property type="entry name" value="HUPs"/>
    <property type="match status" value="1"/>
</dbReference>
<dbReference type="HAMAP" id="MF_00041">
    <property type="entry name" value="Cys_tRNA_synth"/>
    <property type="match status" value="1"/>
</dbReference>
<dbReference type="InterPro" id="IPR015803">
    <property type="entry name" value="Cys-tRNA-ligase"/>
</dbReference>
<dbReference type="InterPro" id="IPR015273">
    <property type="entry name" value="Cys-tRNA-synt_Ia_DALR"/>
</dbReference>
<dbReference type="InterPro" id="IPR024909">
    <property type="entry name" value="Cys-tRNA/MSH_ligase"/>
</dbReference>
<dbReference type="InterPro" id="IPR056411">
    <property type="entry name" value="CysS_C"/>
</dbReference>
<dbReference type="InterPro" id="IPR014729">
    <property type="entry name" value="Rossmann-like_a/b/a_fold"/>
</dbReference>
<dbReference type="InterPro" id="IPR032678">
    <property type="entry name" value="tRNA-synt_1_cat_dom"/>
</dbReference>
<dbReference type="InterPro" id="IPR009080">
    <property type="entry name" value="tRNAsynth_Ia_anticodon-bd"/>
</dbReference>
<dbReference type="NCBIfam" id="TIGR00435">
    <property type="entry name" value="cysS"/>
    <property type="match status" value="1"/>
</dbReference>
<dbReference type="PANTHER" id="PTHR10890:SF3">
    <property type="entry name" value="CYSTEINE--TRNA LIGASE, CYTOPLASMIC"/>
    <property type="match status" value="1"/>
</dbReference>
<dbReference type="PANTHER" id="PTHR10890">
    <property type="entry name" value="CYSTEINYL-TRNA SYNTHETASE"/>
    <property type="match status" value="1"/>
</dbReference>
<dbReference type="Pfam" id="PF23493">
    <property type="entry name" value="CysS_C"/>
    <property type="match status" value="1"/>
</dbReference>
<dbReference type="Pfam" id="PF09190">
    <property type="entry name" value="DALR_2"/>
    <property type="match status" value="1"/>
</dbReference>
<dbReference type="Pfam" id="PF01406">
    <property type="entry name" value="tRNA-synt_1e"/>
    <property type="match status" value="1"/>
</dbReference>
<dbReference type="PRINTS" id="PR00983">
    <property type="entry name" value="TRNASYNTHCYS"/>
</dbReference>
<dbReference type="SMART" id="SM00840">
    <property type="entry name" value="DALR_2"/>
    <property type="match status" value="1"/>
</dbReference>
<dbReference type="SUPFAM" id="SSF47323">
    <property type="entry name" value="Anticodon-binding domain of a subclass of class I aminoacyl-tRNA synthetases"/>
    <property type="match status" value="1"/>
</dbReference>
<dbReference type="SUPFAM" id="SSF52374">
    <property type="entry name" value="Nucleotidylyl transferase"/>
    <property type="match status" value="1"/>
</dbReference>
<name>SYC_YERE8</name>
<reference key="1">
    <citation type="journal article" date="2006" name="PLoS Genet.">
        <title>The complete genome sequence and comparative genome analysis of the high pathogenicity Yersinia enterocolitica strain 8081.</title>
        <authorList>
            <person name="Thomson N.R."/>
            <person name="Howard S."/>
            <person name="Wren B.W."/>
            <person name="Holden M.T.G."/>
            <person name="Crossman L."/>
            <person name="Challis G.L."/>
            <person name="Churcher C."/>
            <person name="Mungall K."/>
            <person name="Brooks K."/>
            <person name="Chillingworth T."/>
            <person name="Feltwell T."/>
            <person name="Abdellah Z."/>
            <person name="Hauser H."/>
            <person name="Jagels K."/>
            <person name="Maddison M."/>
            <person name="Moule S."/>
            <person name="Sanders M."/>
            <person name="Whitehead S."/>
            <person name="Quail M.A."/>
            <person name="Dougan G."/>
            <person name="Parkhill J."/>
            <person name="Prentice M.B."/>
        </authorList>
    </citation>
    <scope>NUCLEOTIDE SEQUENCE [LARGE SCALE GENOMIC DNA]</scope>
    <source>
        <strain>NCTC 13174 / 8081</strain>
    </source>
</reference>
<protein>
    <recommendedName>
        <fullName evidence="1">Cysteine--tRNA ligase</fullName>
        <ecNumber evidence="1">6.1.1.16</ecNumber>
    </recommendedName>
    <alternativeName>
        <fullName evidence="1">Cysteinyl-tRNA synthetase</fullName>
        <shortName evidence="1">CysRS</shortName>
    </alternativeName>
</protein>
<comment type="catalytic activity">
    <reaction evidence="1">
        <text>tRNA(Cys) + L-cysteine + ATP = L-cysteinyl-tRNA(Cys) + AMP + diphosphate</text>
        <dbReference type="Rhea" id="RHEA:17773"/>
        <dbReference type="Rhea" id="RHEA-COMP:9661"/>
        <dbReference type="Rhea" id="RHEA-COMP:9679"/>
        <dbReference type="ChEBI" id="CHEBI:30616"/>
        <dbReference type="ChEBI" id="CHEBI:33019"/>
        <dbReference type="ChEBI" id="CHEBI:35235"/>
        <dbReference type="ChEBI" id="CHEBI:78442"/>
        <dbReference type="ChEBI" id="CHEBI:78517"/>
        <dbReference type="ChEBI" id="CHEBI:456215"/>
        <dbReference type="EC" id="6.1.1.16"/>
    </reaction>
</comment>
<comment type="cofactor">
    <cofactor evidence="1">
        <name>Zn(2+)</name>
        <dbReference type="ChEBI" id="CHEBI:29105"/>
    </cofactor>
    <text evidence="1">Binds 1 zinc ion per subunit.</text>
</comment>
<comment type="subunit">
    <text evidence="1">Monomer.</text>
</comment>
<comment type="subcellular location">
    <subcellularLocation>
        <location evidence="1">Cytoplasm</location>
    </subcellularLocation>
</comment>
<comment type="similarity">
    <text evidence="1">Belongs to the class-I aminoacyl-tRNA synthetase family.</text>
</comment>
<evidence type="ECO:0000255" key="1">
    <source>
        <dbReference type="HAMAP-Rule" id="MF_00041"/>
    </source>
</evidence>